<proteinExistence type="evidence at protein level"/>
<comment type="function">
    <text evidence="10 11">Phosphatidylserine receptor that enhances the engulfment of apoptotic cells. Hyaluronan receptor that binds to and mediates endocytosis of hyaluronic acid (HA). Also acts, in different species, as a primary systemic scavenger receptor for heparin (Hep), chondroitin sulfate (CS), dermatan sulfate (DS), nonglycosaminoglycan (GAG), acetylated low-density lipoprotein (AcLDL), pro-collagen propeptides and advanced glycation end products (AGE). May serve to maintain tissue integrity by supporting extracellular matrix turnover or it may contribute to maintaining fluidity of bodily liquids by resorption of hyaluronan. Counter receptor which plays an important role in lymphocyte recruitment in the hepatic vasculature. Binds to both Gram-positive and Gram-negative bacteria and may play a role in defense against bacterial infection. The proteolytically processed short form also functions as an endocytosis receptor for heparin internalization as well as HA and CS.</text>
</comment>
<comment type="subunit">
    <text evidence="1 10 11">Interacts with heparin, alpha-M/beta-2 integrin (ITGAM and ITGB2), and thymosin beta 4 (TMSB4X) (By similarity). Interacts with GULP1. Associates with clathrin and adapter protein AP-2; in liver sinusoidal endothelial cells (LSECs).</text>
</comment>
<comment type="subcellular location">
    <subcellularLocation>
        <location evidence="2">Cytoplasm</location>
    </subcellularLocation>
    <subcellularLocation>
        <location evidence="10">Cell membrane</location>
        <topology evidence="10">Single-pass type I membrane protein</topology>
    </subcellularLocation>
</comment>
<comment type="tissue specificity">
    <text evidence="8 9">Expressed in endothelial sinuses of liver, lymph nodes, bone marrow, spleen and in specialised structures of eye, heart, brain and kidney. Expression is detected in corneal and lens epithelium, in mesenchymal cells of the heart valves, in the ependymal cells lining the ventricles in the brain, and in the prismatic epithelial cells covering the renal papillae.</text>
</comment>
<comment type="domain">
    <text>Recognizes phosphatidyl serine via its epidermal growth factor-like domains.</text>
</comment>
<comment type="PTM">
    <text evidence="1">Glycosylated.</text>
</comment>
<comment type="PTM">
    <text>Proteolytically processed to yield a smaller protein.</text>
</comment>
<evidence type="ECO:0000250" key="1"/>
<evidence type="ECO:0000250" key="2">
    <source>
        <dbReference type="UniProtKB" id="Q8WWQ8"/>
    </source>
</evidence>
<evidence type="ECO:0000255" key="3"/>
<evidence type="ECO:0000255" key="4">
    <source>
        <dbReference type="PROSITE-ProRule" id="PRU00076"/>
    </source>
</evidence>
<evidence type="ECO:0000255" key="5">
    <source>
        <dbReference type="PROSITE-ProRule" id="PRU00082"/>
    </source>
</evidence>
<evidence type="ECO:0000255" key="6">
    <source>
        <dbReference type="PROSITE-ProRule" id="PRU00323"/>
    </source>
</evidence>
<evidence type="ECO:0000256" key="7">
    <source>
        <dbReference type="SAM" id="MobiDB-lite"/>
    </source>
</evidence>
<evidence type="ECO:0000269" key="8">
    <source>
    </source>
</evidence>
<evidence type="ECO:0000269" key="9">
    <source>
    </source>
</evidence>
<evidence type="ECO:0000269" key="10">
    <source>
    </source>
</evidence>
<evidence type="ECO:0000269" key="11">
    <source>
    </source>
</evidence>
<evidence type="ECO:0000305" key="12"/>
<evidence type="ECO:0000312" key="13">
    <source>
        <dbReference type="EMBL" id="AAL91684.2"/>
    </source>
</evidence>
<evidence type="ECO:0000312" key="14">
    <source>
        <dbReference type="MGI" id="MGI:2178743"/>
    </source>
</evidence>
<evidence type="ECO:0007744" key="15">
    <source>
    </source>
</evidence>
<evidence type="ECO:0007744" key="16">
    <source>
    </source>
</evidence>
<reference evidence="13" key="1">
    <citation type="journal article" date="2002" name="Biochem. J.">
        <title>Stabilin-1 and -2 constitute a novel family of fasciclin-like hyaluronan receptor homologues.</title>
        <authorList>
            <person name="Politz O."/>
            <person name="Gratchev A."/>
            <person name="McCourt P.A.G."/>
            <person name="Schledzewski K."/>
            <person name="Guillot P."/>
            <person name="Johansson S."/>
            <person name="Svineng G."/>
            <person name="Franke P."/>
            <person name="Kannicht C."/>
            <person name="Kzhyshkowska J."/>
            <person name="Longati P."/>
            <person name="Velten F.W."/>
            <person name="Johansson S."/>
            <person name="Goerdt S."/>
        </authorList>
    </citation>
    <scope>NUCLEOTIDE SEQUENCE [MRNA]</scope>
    <source>
        <strain evidence="13">BALB/cJ</strain>
        <tissue evidence="13">Liver</tissue>
    </source>
</reference>
<reference key="2">
    <citation type="journal article" date="2005" name="Science">
        <title>The transcriptional landscape of the mammalian genome.</title>
        <authorList>
            <person name="Carninci P."/>
            <person name="Kasukawa T."/>
            <person name="Katayama S."/>
            <person name="Gough J."/>
            <person name="Frith M.C."/>
            <person name="Maeda N."/>
            <person name="Oyama R."/>
            <person name="Ravasi T."/>
            <person name="Lenhard B."/>
            <person name="Wells C."/>
            <person name="Kodzius R."/>
            <person name="Shimokawa K."/>
            <person name="Bajic V.B."/>
            <person name="Brenner S.E."/>
            <person name="Batalov S."/>
            <person name="Forrest A.R."/>
            <person name="Zavolan M."/>
            <person name="Davis M.J."/>
            <person name="Wilming L.G."/>
            <person name="Aidinis V."/>
            <person name="Allen J.E."/>
            <person name="Ambesi-Impiombato A."/>
            <person name="Apweiler R."/>
            <person name="Aturaliya R.N."/>
            <person name="Bailey T.L."/>
            <person name="Bansal M."/>
            <person name="Baxter L."/>
            <person name="Beisel K.W."/>
            <person name="Bersano T."/>
            <person name="Bono H."/>
            <person name="Chalk A.M."/>
            <person name="Chiu K.P."/>
            <person name="Choudhary V."/>
            <person name="Christoffels A."/>
            <person name="Clutterbuck D.R."/>
            <person name="Crowe M.L."/>
            <person name="Dalla E."/>
            <person name="Dalrymple B.P."/>
            <person name="de Bono B."/>
            <person name="Della Gatta G."/>
            <person name="di Bernardo D."/>
            <person name="Down T."/>
            <person name="Engstrom P."/>
            <person name="Fagiolini M."/>
            <person name="Faulkner G."/>
            <person name="Fletcher C.F."/>
            <person name="Fukushima T."/>
            <person name="Furuno M."/>
            <person name="Futaki S."/>
            <person name="Gariboldi M."/>
            <person name="Georgii-Hemming P."/>
            <person name="Gingeras T.R."/>
            <person name="Gojobori T."/>
            <person name="Green R.E."/>
            <person name="Gustincich S."/>
            <person name="Harbers M."/>
            <person name="Hayashi Y."/>
            <person name="Hensch T.K."/>
            <person name="Hirokawa N."/>
            <person name="Hill D."/>
            <person name="Huminiecki L."/>
            <person name="Iacono M."/>
            <person name="Ikeo K."/>
            <person name="Iwama A."/>
            <person name="Ishikawa T."/>
            <person name="Jakt M."/>
            <person name="Kanapin A."/>
            <person name="Katoh M."/>
            <person name="Kawasawa Y."/>
            <person name="Kelso J."/>
            <person name="Kitamura H."/>
            <person name="Kitano H."/>
            <person name="Kollias G."/>
            <person name="Krishnan S.P."/>
            <person name="Kruger A."/>
            <person name="Kummerfeld S.K."/>
            <person name="Kurochkin I.V."/>
            <person name="Lareau L.F."/>
            <person name="Lazarevic D."/>
            <person name="Lipovich L."/>
            <person name="Liu J."/>
            <person name="Liuni S."/>
            <person name="McWilliam S."/>
            <person name="Madan Babu M."/>
            <person name="Madera M."/>
            <person name="Marchionni L."/>
            <person name="Matsuda H."/>
            <person name="Matsuzawa S."/>
            <person name="Miki H."/>
            <person name="Mignone F."/>
            <person name="Miyake S."/>
            <person name="Morris K."/>
            <person name="Mottagui-Tabar S."/>
            <person name="Mulder N."/>
            <person name="Nakano N."/>
            <person name="Nakauchi H."/>
            <person name="Ng P."/>
            <person name="Nilsson R."/>
            <person name="Nishiguchi S."/>
            <person name="Nishikawa S."/>
            <person name="Nori F."/>
            <person name="Ohara O."/>
            <person name="Okazaki Y."/>
            <person name="Orlando V."/>
            <person name="Pang K.C."/>
            <person name="Pavan W.J."/>
            <person name="Pavesi G."/>
            <person name="Pesole G."/>
            <person name="Petrovsky N."/>
            <person name="Piazza S."/>
            <person name="Reed J."/>
            <person name="Reid J.F."/>
            <person name="Ring B.Z."/>
            <person name="Ringwald M."/>
            <person name="Rost B."/>
            <person name="Ruan Y."/>
            <person name="Salzberg S.L."/>
            <person name="Sandelin A."/>
            <person name="Schneider C."/>
            <person name="Schoenbach C."/>
            <person name="Sekiguchi K."/>
            <person name="Semple C.A."/>
            <person name="Seno S."/>
            <person name="Sessa L."/>
            <person name="Sheng Y."/>
            <person name="Shibata Y."/>
            <person name="Shimada H."/>
            <person name="Shimada K."/>
            <person name="Silva D."/>
            <person name="Sinclair B."/>
            <person name="Sperling S."/>
            <person name="Stupka E."/>
            <person name="Sugiura K."/>
            <person name="Sultana R."/>
            <person name="Takenaka Y."/>
            <person name="Taki K."/>
            <person name="Tammoja K."/>
            <person name="Tan S.L."/>
            <person name="Tang S."/>
            <person name="Taylor M.S."/>
            <person name="Tegner J."/>
            <person name="Teichmann S.A."/>
            <person name="Ueda H.R."/>
            <person name="van Nimwegen E."/>
            <person name="Verardo R."/>
            <person name="Wei C.L."/>
            <person name="Yagi K."/>
            <person name="Yamanishi H."/>
            <person name="Zabarovsky E."/>
            <person name="Zhu S."/>
            <person name="Zimmer A."/>
            <person name="Hide W."/>
            <person name="Bult C."/>
            <person name="Grimmond S.M."/>
            <person name="Teasdale R.D."/>
            <person name="Liu E.T."/>
            <person name="Brusic V."/>
            <person name="Quackenbush J."/>
            <person name="Wahlestedt C."/>
            <person name="Mattick J.S."/>
            <person name="Hume D.A."/>
            <person name="Kai C."/>
            <person name="Sasaki D."/>
            <person name="Tomaru Y."/>
            <person name="Fukuda S."/>
            <person name="Kanamori-Katayama M."/>
            <person name="Suzuki M."/>
            <person name="Aoki J."/>
            <person name="Arakawa T."/>
            <person name="Iida J."/>
            <person name="Imamura K."/>
            <person name="Itoh M."/>
            <person name="Kato T."/>
            <person name="Kawaji H."/>
            <person name="Kawagashira N."/>
            <person name="Kawashima T."/>
            <person name="Kojima M."/>
            <person name="Kondo S."/>
            <person name="Konno H."/>
            <person name="Nakano K."/>
            <person name="Ninomiya N."/>
            <person name="Nishio T."/>
            <person name="Okada M."/>
            <person name="Plessy C."/>
            <person name="Shibata K."/>
            <person name="Shiraki T."/>
            <person name="Suzuki S."/>
            <person name="Tagami M."/>
            <person name="Waki K."/>
            <person name="Watahiki A."/>
            <person name="Okamura-Oho Y."/>
            <person name="Suzuki H."/>
            <person name="Kawai J."/>
            <person name="Hayashizaki Y."/>
        </authorList>
    </citation>
    <scope>NUCLEOTIDE SEQUENCE [LARGE SCALE MRNA] OF 1666-2559</scope>
    <source>
        <strain>C57BL/6J</strain>
        <tissue>Diencephalon</tissue>
    </source>
</reference>
<reference key="3">
    <citation type="journal article" date="2003" name="J. Biol. Chem.">
        <title>FEEL-1 and FEEL-2 are endocytic receptors for advanced glycation end products.</title>
        <authorList>
            <person name="Tamura Y."/>
            <person name="Adachi H."/>
            <person name="Osuga J."/>
            <person name="Ohashi K."/>
            <person name="Yahagi N."/>
            <person name="Sekiya M."/>
            <person name="Okazaki H."/>
            <person name="Tomita S."/>
            <person name="Iizuka Y."/>
            <person name="Shimano H."/>
            <person name="Nagai R."/>
            <person name="Kimura S."/>
            <person name="Tsujimoto M."/>
            <person name="Ishibashi S."/>
        </authorList>
    </citation>
    <scope>TISSUE SPECIFICITY</scope>
</reference>
<reference key="4">
    <citation type="journal article" date="2003" name="Histochem. Cell Biol.">
        <title>Expression of stabilin-2, a novel fasciclin-like hyaluronan receptor protein, in murine sinusoidal endothelia, avascular tissues, and at solid/liquid interfaces.</title>
        <authorList>
            <person name="Falkowski M."/>
            <person name="Schledzewski K."/>
            <person name="Hansen B."/>
            <person name="Goerdt S."/>
        </authorList>
    </citation>
    <scope>TISSUE SPECIFICITY</scope>
</reference>
<reference key="5">
    <citation type="journal article" date="2005" name="Exp. Cell Res.">
        <title>Stabilin-1 and stabilin-2 are both directed into the early endocytic pathway in hepatic sinusoidal endothelium via interactions with clathrin/AP-2, independent of ligand binding.</title>
        <authorList>
            <person name="Hansen B."/>
            <person name="Longati P."/>
            <person name="Elvevold K."/>
            <person name="Nedredal G.-I."/>
            <person name="Schledzewski K."/>
            <person name="Olsen R."/>
            <person name="Falkowski M."/>
            <person name="Kzhyshkowska J."/>
            <person name="Carlsson F."/>
            <person name="Johansson S."/>
            <person name="Smedsroed B."/>
            <person name="Goerdt S."/>
            <person name="Johansson S."/>
            <person name="McCourt P."/>
        </authorList>
    </citation>
    <scope>FUNCTION</scope>
    <scope>INTERACTION WITH CLATHRIN AND AP2</scope>
    <scope>SUBCELLULAR LOCATION</scope>
</reference>
<reference key="6">
    <citation type="journal article" date="2007" name="Proc. Natl. Acad. Sci. U.S.A.">
        <title>Large-scale phosphorylation analysis of mouse liver.</title>
        <authorList>
            <person name="Villen J."/>
            <person name="Beausoleil S.A."/>
            <person name="Gerber S.A."/>
            <person name="Gygi S.P."/>
        </authorList>
    </citation>
    <scope>PHOSPHORYLATION [LARGE SCALE ANALYSIS] AT SER-2503</scope>
    <scope>IDENTIFICATION BY MASS SPECTROMETRY [LARGE SCALE ANALYSIS]</scope>
    <source>
        <tissue>Liver</tissue>
    </source>
</reference>
<reference key="7">
    <citation type="journal article" date="2008" name="J. Biol. Chem.">
        <title>Requirement of adaptor protein GULP during stabilin-2-mediated cell corpse engulfment.</title>
        <authorList>
            <person name="Park S.Y."/>
            <person name="Kang K.B."/>
            <person name="Thapa N."/>
            <person name="Kim S.Y."/>
            <person name="Lee S.J."/>
            <person name="Kim I.S."/>
        </authorList>
    </citation>
    <scope>FUNCTION</scope>
    <scope>INTERACTION WITH GULP1</scope>
</reference>
<reference key="8">
    <citation type="journal article" date="2010" name="Cell">
        <title>A tissue-specific atlas of mouse protein phosphorylation and expression.</title>
        <authorList>
            <person name="Huttlin E.L."/>
            <person name="Jedrychowski M.P."/>
            <person name="Elias J.E."/>
            <person name="Goswami T."/>
            <person name="Rad R."/>
            <person name="Beausoleil S.A."/>
            <person name="Villen J."/>
            <person name="Haas W."/>
            <person name="Sowa M.E."/>
            <person name="Gygi S.P."/>
        </authorList>
    </citation>
    <scope>PHOSPHORYLATION [LARGE SCALE ANALYSIS] AT SER-2503</scope>
    <scope>IDENTIFICATION BY MASS SPECTROMETRY [LARGE SCALE ANALYSIS]</scope>
    <source>
        <tissue>Liver</tissue>
        <tissue>Spleen</tissue>
    </source>
</reference>
<dbReference type="EMBL" id="AF364951">
    <property type="protein sequence ID" value="AAL91684.2"/>
    <property type="molecule type" value="mRNA"/>
</dbReference>
<dbReference type="EMBL" id="AK034522">
    <property type="protein sequence ID" value="BAC28741.1"/>
    <property type="molecule type" value="mRNA"/>
</dbReference>
<dbReference type="CCDS" id="CCDS36021.1"/>
<dbReference type="RefSeq" id="NP_619614.1">
    <property type="nucleotide sequence ID" value="NM_138673.3"/>
</dbReference>
<dbReference type="SMR" id="Q8R4U0"/>
<dbReference type="BioGRID" id="228666">
    <property type="interactions" value="2"/>
</dbReference>
<dbReference type="FunCoup" id="Q8R4U0">
    <property type="interactions" value="302"/>
</dbReference>
<dbReference type="STRING" id="10090.ENSMUSP00000048309"/>
<dbReference type="GlyCosmos" id="Q8R4U0">
    <property type="glycosylation" value="29 sites, No reported glycans"/>
</dbReference>
<dbReference type="GlyGen" id="Q8R4U0">
    <property type="glycosylation" value="31 sites, 1 O-linked glycan (2 sites)"/>
</dbReference>
<dbReference type="iPTMnet" id="Q8R4U0"/>
<dbReference type="PhosphoSitePlus" id="Q8R4U0"/>
<dbReference type="SwissPalm" id="Q8R4U0"/>
<dbReference type="CPTAC" id="non-CPTAC-3499"/>
<dbReference type="jPOST" id="Q8R4U0"/>
<dbReference type="PaxDb" id="10090-ENSMUSP00000048309"/>
<dbReference type="ProteomicsDB" id="257446"/>
<dbReference type="Antibodypedia" id="18052">
    <property type="antibodies" value="152 antibodies from 22 providers"/>
</dbReference>
<dbReference type="DNASU" id="192188"/>
<dbReference type="Ensembl" id="ENSMUST00000035288.17">
    <property type="protein sequence ID" value="ENSMUSP00000048309.9"/>
    <property type="gene ID" value="ENSMUSG00000035459.19"/>
</dbReference>
<dbReference type="GeneID" id="192188"/>
<dbReference type="KEGG" id="mmu:192188"/>
<dbReference type="UCSC" id="uc007gqo.1">
    <property type="organism name" value="mouse"/>
</dbReference>
<dbReference type="AGR" id="MGI:2178743"/>
<dbReference type="CTD" id="55576"/>
<dbReference type="MGI" id="MGI:2178743">
    <property type="gene designation" value="Stab2"/>
</dbReference>
<dbReference type="VEuPathDB" id="HostDB:ENSMUSG00000035459"/>
<dbReference type="eggNOG" id="KOG1218">
    <property type="taxonomic scope" value="Eukaryota"/>
</dbReference>
<dbReference type="GeneTree" id="ENSGT00940000156566"/>
<dbReference type="HOGENOM" id="CLU_001035_0_0_1"/>
<dbReference type="InParanoid" id="Q8R4U0"/>
<dbReference type="OMA" id="NNKSEMW"/>
<dbReference type="OrthoDB" id="286301at2759"/>
<dbReference type="PhylomeDB" id="Q8R4U0"/>
<dbReference type="TreeFam" id="TF331489"/>
<dbReference type="Reactome" id="R-MMU-2160916">
    <property type="pathway name" value="Hyaluronan uptake and degradation"/>
</dbReference>
<dbReference type="Reactome" id="R-MMU-3000497">
    <property type="pathway name" value="Scavenging by Class H Receptors"/>
</dbReference>
<dbReference type="BioGRID-ORCS" id="192188">
    <property type="hits" value="0 hits in 76 CRISPR screens"/>
</dbReference>
<dbReference type="ChiTaRS" id="Stab2">
    <property type="organism name" value="mouse"/>
</dbReference>
<dbReference type="PRO" id="PR:Q8R4U0"/>
<dbReference type="Proteomes" id="UP000000589">
    <property type="component" value="Chromosome 10"/>
</dbReference>
<dbReference type="RNAct" id="Q8R4U0">
    <property type="molecule type" value="protein"/>
</dbReference>
<dbReference type="Bgee" id="ENSMUSG00000035459">
    <property type="expression patterns" value="Expressed in mesenteric lymph node and 105 other cell types or tissues"/>
</dbReference>
<dbReference type="ExpressionAtlas" id="Q8R4U0">
    <property type="expression patterns" value="baseline and differential"/>
</dbReference>
<dbReference type="GO" id="GO:0005829">
    <property type="term" value="C:cytosol"/>
    <property type="evidence" value="ECO:0007669"/>
    <property type="project" value="Ensembl"/>
</dbReference>
<dbReference type="GO" id="GO:0009897">
    <property type="term" value="C:external side of plasma membrane"/>
    <property type="evidence" value="ECO:0000250"/>
    <property type="project" value="UniProtKB"/>
</dbReference>
<dbReference type="GO" id="GO:0005509">
    <property type="term" value="F:calcium ion binding"/>
    <property type="evidence" value="ECO:0007669"/>
    <property type="project" value="InterPro"/>
</dbReference>
<dbReference type="GO" id="GO:0038024">
    <property type="term" value="F:cargo receptor activity"/>
    <property type="evidence" value="ECO:0000315"/>
    <property type="project" value="MGI"/>
</dbReference>
<dbReference type="GO" id="GO:0005540">
    <property type="term" value="F:hyaluronic acid binding"/>
    <property type="evidence" value="ECO:0000250"/>
    <property type="project" value="UniProtKB"/>
</dbReference>
<dbReference type="GO" id="GO:0030169">
    <property type="term" value="F:low-density lipoprotein particle binding"/>
    <property type="evidence" value="ECO:0007669"/>
    <property type="project" value="Ensembl"/>
</dbReference>
<dbReference type="GO" id="GO:0005041">
    <property type="term" value="F:low-density lipoprotein particle receptor activity"/>
    <property type="evidence" value="ECO:0007669"/>
    <property type="project" value="Ensembl"/>
</dbReference>
<dbReference type="GO" id="GO:0005044">
    <property type="term" value="F:scavenger receptor activity"/>
    <property type="evidence" value="ECO:0007669"/>
    <property type="project" value="Ensembl"/>
</dbReference>
<dbReference type="GO" id="GO:0007155">
    <property type="term" value="P:cell adhesion"/>
    <property type="evidence" value="ECO:0007669"/>
    <property type="project" value="InterPro"/>
</dbReference>
<dbReference type="GO" id="GO:0050830">
    <property type="term" value="P:defense response to Gram-positive bacterium"/>
    <property type="evidence" value="ECO:0000250"/>
    <property type="project" value="UniProtKB"/>
</dbReference>
<dbReference type="GO" id="GO:0006897">
    <property type="term" value="P:endocytosis"/>
    <property type="evidence" value="ECO:0000250"/>
    <property type="project" value="UniProtKB"/>
</dbReference>
<dbReference type="GO" id="GO:0030214">
    <property type="term" value="P:hyaluronan catabolic process"/>
    <property type="evidence" value="ECO:0000315"/>
    <property type="project" value="MGI"/>
</dbReference>
<dbReference type="GO" id="GO:0006898">
    <property type="term" value="P:receptor-mediated endocytosis"/>
    <property type="evidence" value="ECO:0000315"/>
    <property type="project" value="MGI"/>
</dbReference>
<dbReference type="CDD" id="cd00055">
    <property type="entry name" value="EGF_Lam"/>
    <property type="match status" value="1"/>
</dbReference>
<dbReference type="FunFam" id="3.10.100.10:FF:000001">
    <property type="entry name" value="Hyaluronan proteoglycan link protein 1"/>
    <property type="match status" value="1"/>
</dbReference>
<dbReference type="FunFam" id="2.10.25.10:FF:000040">
    <property type="entry name" value="Stabilin 2"/>
    <property type="match status" value="5"/>
</dbReference>
<dbReference type="FunFam" id="2.10.25.10:FF:000278">
    <property type="entry name" value="Stabilin 2"/>
    <property type="match status" value="1"/>
</dbReference>
<dbReference type="FunFam" id="2.10.25.10:FF:000410">
    <property type="entry name" value="Stabilin 2"/>
    <property type="match status" value="1"/>
</dbReference>
<dbReference type="FunFam" id="2.10.25.10:FF:000448">
    <property type="entry name" value="Stabilin 2"/>
    <property type="match status" value="1"/>
</dbReference>
<dbReference type="FunFam" id="2.10.25.10:FF:000470">
    <property type="entry name" value="Stabilin 2"/>
    <property type="match status" value="1"/>
</dbReference>
<dbReference type="FunFam" id="2.10.25.10:FF:000477">
    <property type="entry name" value="Stabilin 2"/>
    <property type="match status" value="1"/>
</dbReference>
<dbReference type="FunFam" id="2.10.25.10:FF:000497">
    <property type="entry name" value="Stabilin 2"/>
    <property type="match status" value="1"/>
</dbReference>
<dbReference type="FunFam" id="2.10.25.10:FF:000708">
    <property type="entry name" value="Stabilin 2"/>
    <property type="match status" value="1"/>
</dbReference>
<dbReference type="FunFam" id="2.30.180.10:FF:000005">
    <property type="entry name" value="Stabilin 2"/>
    <property type="match status" value="2"/>
</dbReference>
<dbReference type="FunFam" id="2.30.180.10:FF:000016">
    <property type="entry name" value="Stabilin 2"/>
    <property type="match status" value="1"/>
</dbReference>
<dbReference type="FunFam" id="2.30.180.10:FF:000017">
    <property type="entry name" value="Stabilin 2"/>
    <property type="match status" value="1"/>
</dbReference>
<dbReference type="FunFam" id="2.30.180.10:FF:000018">
    <property type="entry name" value="Stabilin 2"/>
    <property type="match status" value="1"/>
</dbReference>
<dbReference type="FunFam" id="2.30.180.10:FF:000020">
    <property type="entry name" value="Stabilin 2"/>
    <property type="match status" value="1"/>
</dbReference>
<dbReference type="FunFam" id="2.30.180.10:FF:000021">
    <property type="entry name" value="Stabilin 2"/>
    <property type="match status" value="1"/>
</dbReference>
<dbReference type="Gene3D" id="2.30.180.10">
    <property type="entry name" value="FAS1 domain"/>
    <property type="match status" value="7"/>
</dbReference>
<dbReference type="Gene3D" id="2.10.25.10">
    <property type="entry name" value="Laminin"/>
    <property type="match status" value="15"/>
</dbReference>
<dbReference type="Gene3D" id="3.10.100.10">
    <property type="entry name" value="Mannose-Binding Protein A, subunit A"/>
    <property type="match status" value="1"/>
</dbReference>
<dbReference type="Gene3D" id="2.170.300.10">
    <property type="entry name" value="Tie2 ligand-binding domain superfamily"/>
    <property type="match status" value="1"/>
</dbReference>
<dbReference type="InterPro" id="IPR016186">
    <property type="entry name" value="C-type_lectin-like/link_sf"/>
</dbReference>
<dbReference type="InterPro" id="IPR016187">
    <property type="entry name" value="CTDL_fold"/>
</dbReference>
<dbReference type="InterPro" id="IPR001881">
    <property type="entry name" value="EGF-like_Ca-bd_dom"/>
</dbReference>
<dbReference type="InterPro" id="IPR000742">
    <property type="entry name" value="EGF-like_dom"/>
</dbReference>
<dbReference type="InterPro" id="IPR024731">
    <property type="entry name" value="EGF_dom"/>
</dbReference>
<dbReference type="InterPro" id="IPR056806">
    <property type="entry name" value="EGF_STAB1-2"/>
</dbReference>
<dbReference type="InterPro" id="IPR036378">
    <property type="entry name" value="FAS1_dom_sf"/>
</dbReference>
<dbReference type="InterPro" id="IPR000782">
    <property type="entry name" value="FAS1_domain"/>
</dbReference>
<dbReference type="InterPro" id="IPR002049">
    <property type="entry name" value="LE_dom"/>
</dbReference>
<dbReference type="InterPro" id="IPR000538">
    <property type="entry name" value="Link_dom"/>
</dbReference>
<dbReference type="PANTHER" id="PTHR24038">
    <property type="entry name" value="STABILIN"/>
    <property type="match status" value="1"/>
</dbReference>
<dbReference type="PANTHER" id="PTHR24038:SF0">
    <property type="entry name" value="STABILIN-2"/>
    <property type="match status" value="1"/>
</dbReference>
<dbReference type="Pfam" id="PF12947">
    <property type="entry name" value="EGF_3"/>
    <property type="match status" value="11"/>
</dbReference>
<dbReference type="Pfam" id="PF24887">
    <property type="entry name" value="EGF_STAB1-2"/>
    <property type="match status" value="2"/>
</dbReference>
<dbReference type="Pfam" id="PF02469">
    <property type="entry name" value="Fasciclin"/>
    <property type="match status" value="7"/>
</dbReference>
<dbReference type="Pfam" id="PF00193">
    <property type="entry name" value="Xlink"/>
    <property type="match status" value="1"/>
</dbReference>
<dbReference type="SMART" id="SM00181">
    <property type="entry name" value="EGF"/>
    <property type="match status" value="21"/>
</dbReference>
<dbReference type="SMART" id="SM00179">
    <property type="entry name" value="EGF_CA"/>
    <property type="match status" value="7"/>
</dbReference>
<dbReference type="SMART" id="SM00180">
    <property type="entry name" value="EGF_Lam"/>
    <property type="match status" value="5"/>
</dbReference>
<dbReference type="SMART" id="SM00554">
    <property type="entry name" value="FAS1"/>
    <property type="match status" value="7"/>
</dbReference>
<dbReference type="SMART" id="SM00445">
    <property type="entry name" value="LINK"/>
    <property type="match status" value="1"/>
</dbReference>
<dbReference type="SUPFAM" id="SSF56436">
    <property type="entry name" value="C-type lectin-like"/>
    <property type="match status" value="1"/>
</dbReference>
<dbReference type="SUPFAM" id="SSF57196">
    <property type="entry name" value="EGF/Laminin"/>
    <property type="match status" value="2"/>
</dbReference>
<dbReference type="SUPFAM" id="SSF82153">
    <property type="entry name" value="FAS1 domain"/>
    <property type="match status" value="7"/>
</dbReference>
<dbReference type="PROSITE" id="PS00022">
    <property type="entry name" value="EGF_1"/>
    <property type="match status" value="7"/>
</dbReference>
<dbReference type="PROSITE" id="PS01186">
    <property type="entry name" value="EGF_2"/>
    <property type="match status" value="16"/>
</dbReference>
<dbReference type="PROSITE" id="PS50026">
    <property type="entry name" value="EGF_3"/>
    <property type="match status" value="21"/>
</dbReference>
<dbReference type="PROSITE" id="PS01248">
    <property type="entry name" value="EGF_LAM_1"/>
    <property type="match status" value="2"/>
</dbReference>
<dbReference type="PROSITE" id="PS50213">
    <property type="entry name" value="FAS1"/>
    <property type="match status" value="7"/>
</dbReference>
<dbReference type="PROSITE" id="PS01241">
    <property type="entry name" value="LINK_1"/>
    <property type="match status" value="1"/>
</dbReference>
<dbReference type="PROSITE" id="PS50963">
    <property type="entry name" value="LINK_2"/>
    <property type="match status" value="1"/>
</dbReference>
<accession>Q8R4U0</accession>
<accession>Q8BM87</accession>
<name>STAB2_MOUSE</name>
<sequence>MARSKLLLGKLLPLILIFLGLLVQNACSPTEAPELTKRCDKKSTLTIKTECQSCSVNIAVKCPDGYIKITNGTVGVRDCRYSLKIQSYVLDIPGCRHICRKDYLQPQCCPGHWGPDCMECPGGARAPCGGRGVCDEGMEGTGSCSCRAGFRGTACENCAAEDVFGPNCSAVCSCVHGVCNSGISGDGTCECLSAYRGPRCDKPIPECAALLCPENSRCSPSSKDETKLQCKCLPSYKGDGQTCKPINPCLKNVCHPHASCSYLGPNRHSCVCQKGYQGDGQVCLPVDPCQTSYGNCPTKSTVCRYDGPGQSHCECKEHYRNFVPGVGCSMTDICESKNPCHKNANCSTVSPGQTQCTCQKGYVGDGLNCYGNIMQRLRELNTEPRGMWQGQLTSFISILDRTYAWPLSNLGPFTVLLPSDKGLKGVDVKELLMDKEAARYFVKLHIIAGQMSTEQMYNLDTFYTLTGKSGEIINKDKDNQLKLKLYGSKIVQIIQGNIVASNGLVHILDRAMDKIEPTLESNPQQTIMTMLQPRYGKFRSLLEKTNVGQALEKGGIDEPYTIFVPSNEALSNMTAGVLDYLLSPEGSRKLLELVRYHIVAFTQLEVATLVSTLHIRSMANQIITFNISSKGQILANNVAVDETEVAAKNGRIYTLTGVLIPPSILPILPHRCNETKREMKLGTCVRCFMKNWSKCPTNSEPTAIFTNKCFYGSRAWNLKIGCARYCDVTVEIPRCCKGFFGPDCNPCPGGFMNPCSGNGQCIDGLGGNGTCICEDGFQGSRCQFCSKPNRYGPQCNRTCQCVHGICDNRLDSDGSCLPGTCREGTAGRFCDKQTSACGPYMQFCHIHATCEYSNETASCVCNDGYEGDGTLCSKKDPCLGSTSRGGCSPNAECIQASTGTYSCVCQRGWTGNGRDCVEINSCLLPSSGGCHDNATCLYVGPGQNECECKKGFRGNGIDCEPIISCLEQIEKCHPLATCQYTLSGVWSCVCQEGYEGNGVLCYGNVLMELSFLSEAAVFYQWINNASLQSMLSATSNLTVLVPSLQAIKDMDQNEKSFWLSRNNIPALIKYHTLLGTYRVADLQTLPSSHMLATSLQGSFLRLDKADGNITIEGASFVDGDNAATNGVVHIINKVLIPQRGLTGSLPSLLTRLEQMPDYSIFRGYIIHYNLASAIEAADAYTVFVPNNEAIESYIREKKATSLKEDILQYHVVLGEKLLRNDLHNGMHRETMLGFSYLLAFFLHNDQLYVNEAPINYTNVATDKGVIHGLEKVLEIKKNRCDNNDTIIVRGKCGKCSQQTLCPLETKPLSETRKCIYSVYFMGKRSIFIGCQLQCVRTIITSACCAGFFGPQCQACPGKGQNVCSGNGFCLDGVNGTGTCECEQGFNGTACETCTEGKYGIHCDQACSCVHGRCNQGPSGDGSCDCDVGWRGVKCDSEITTDNCNGTCHTSANCLLDPDGKASCKCAAGFQGNGTVCTAINACEISNGGCSAKADCKRTIPGSRVCVCKAGYTGDGIVCLEINPCLENHGGCDRHAECTQTGPNQAVCNCLPKYTGDGKVCTLINVCLTNNGGCSPFAFCNHTEQDQRTCTCKPDYTGDGIVCRGSIHSELPKNPSTSQYFFQLQEHAVQELAGPGPFTVFVPSSDSFNSESKLKVWDKQGLMSQILRYHVVACQQLLLENLKVITSATTLQGEPISISVSQDTVLINKKAKVLSSDIISTNGVIHVIDTLLSPQNLLITPKGASGRVLLNLTTVAANHGYTKFSKLIQDSGLLKVITDPMHTPVTLFWPTDKALQALPQEQQDFLFNEDNKDKLKAYLKFHVIRDTMALASDLPRSASWKTLQGSELSVRCGTGSDVGELFLNGQMCRIIQRRLLFDGGVAYGIDCLLMDPTEGGRCDTFTTFNIPGECGSCFSTPRCPLQSKPKGVRKKCIYNPLPFRRDVEGCQNLCTLVVHVPRCCSGYFMPDCQACPGGPDTPCNNRGMCYDQYKPTGQCQCHTGFNGTACELCLPGRFGPDCQPCGCSEHGQCDEGITGSGQCLCEAGWTGRFCDAPTVVIPVCIPACSMHATCMENNTCVCNLNYEGDGITCTVVDFCKQNNGGCAKVAKCSQKGTQVSCSCQKGYKGDGHSCTEIDPCANGVNGGCHEHATCRMTGPGKQKCECKSHYVGDGRDCEPEQLPLDRCLQDNGQCHPDANCVDLHFQDTTVGVFHLRSPLGQYKLTFDKAKEACAKEAASIATYNQLSYAQKAKYHLCSAGWLESGRVAYPTIYASKKCANIVGIVDYGTRTNKSEMWDVFCYRMKDVNCTCKAGYVGDGFSCNGNLLQVLMSFPSLTNFLTEVLVFSRSSAQGRAFLKHLTDLSISGTLFVPQNSGLPKNKSLSGRDIEHHLTNVNVSFYDDLVNGTVLKTRLGSQLLITSSQDQLHQEARFVDGRAILQWDIIASNGVLHIISEPLKAPPTAATAAHSGLGTGIFCAVVLVTGAIALAAYSYFRLNQRTTGFRRFESEDDIDALAFGKQQPESITNPLYETSTPAAPEPSCDPFTDSGERELENSDPLGALRS</sequence>
<feature type="signal peptide" evidence="3">
    <location>
        <begin position="1"/>
        <end position="28"/>
    </location>
</feature>
<feature type="chain" id="PRO_0000007714" description="Stabilin-2">
    <location>
        <begin position="29"/>
        <end position="2559"/>
    </location>
</feature>
<feature type="chain" id="PRO_0000007715" description="Short form stabilin-2" evidence="1">
    <location>
        <begin position="1136"/>
        <end position="2551"/>
    </location>
</feature>
<feature type="topological domain" description="Extracellular" evidence="3">
    <location>
        <begin position="29"/>
        <end position="2464"/>
    </location>
</feature>
<feature type="transmembrane region" description="Helical" evidence="3">
    <location>
        <begin position="2465"/>
        <end position="2485"/>
    </location>
</feature>
<feature type="topological domain" description="Cytoplasmic" evidence="3">
    <location>
        <begin position="2486"/>
        <end position="2559"/>
    </location>
</feature>
<feature type="domain" description="EGF-like 1" evidence="4">
    <location>
        <begin position="116"/>
        <end position="156"/>
    </location>
</feature>
<feature type="domain" description="EGF-like 2" evidence="4">
    <location>
        <begin position="164"/>
        <end position="201"/>
    </location>
</feature>
<feature type="domain" description="EGF-like 3" evidence="4">
    <location>
        <begin position="203"/>
        <end position="244"/>
    </location>
</feature>
<feature type="domain" description="EGF-like 4" evidence="4">
    <location>
        <begin position="245"/>
        <end position="284"/>
    </location>
</feature>
<feature type="domain" description="EGF-like 5" evidence="4">
    <location>
        <begin position="330"/>
        <end position="370"/>
    </location>
</feature>
<feature type="domain" description="FAS1 1" evidence="5">
    <location>
        <begin position="379"/>
        <end position="512"/>
    </location>
</feature>
<feature type="domain" description="FAS1 2" evidence="5">
    <location>
        <begin position="522"/>
        <end position="659"/>
    </location>
</feature>
<feature type="domain" description="EGF-like 6" evidence="4">
    <location>
        <begin position="743"/>
        <end position="783"/>
    </location>
</feature>
<feature type="domain" description="EGF-like 7" evidence="4">
    <location>
        <begin position="833"/>
        <end position="873"/>
    </location>
</feature>
<feature type="domain" description="EGF-like 8" evidence="4">
    <location>
        <begin position="874"/>
        <end position="917"/>
    </location>
</feature>
<feature type="domain" description="EGF-like 9" evidence="4">
    <location>
        <begin position="918"/>
        <end position="960"/>
    </location>
</feature>
<feature type="domain" description="EGF-like 10" evidence="4">
    <location>
        <begin position="961"/>
        <end position="1002"/>
    </location>
</feature>
<feature type="domain" description="FAS1 3" evidence="5">
    <location>
        <begin position="1002"/>
        <end position="1135"/>
    </location>
</feature>
<feature type="domain" description="FAS1 4" evidence="5">
    <location>
        <begin position="1145"/>
        <end position="1273"/>
    </location>
</feature>
<feature type="domain" description="Laminin EGF-like 1" evidence="3">
    <location>
        <begin position="1350"/>
        <end position="1415"/>
    </location>
</feature>
<feature type="domain" description="EGF-like 11" evidence="4">
    <location>
        <begin position="1439"/>
        <end position="1477"/>
    </location>
</feature>
<feature type="domain" description="EGF-like 12" evidence="4">
    <location>
        <begin position="1478"/>
        <end position="1519"/>
    </location>
</feature>
<feature type="domain" description="EGF-like 13" evidence="4">
    <location>
        <begin position="1520"/>
        <end position="1561"/>
    </location>
</feature>
<feature type="domain" description="EGF-like 14" evidence="4">
    <location>
        <begin position="1562"/>
        <end position="1603"/>
    </location>
</feature>
<feature type="domain" description="FAS1 5" evidence="5">
    <location>
        <begin position="1603"/>
        <end position="1731"/>
    </location>
</feature>
<feature type="domain" description="FAS1 6" evidence="5">
    <location>
        <begin position="1747"/>
        <end position="1888"/>
    </location>
</feature>
<feature type="domain" description="Laminin EGF-like 2" evidence="3">
    <location>
        <begin position="1965"/>
        <end position="2030"/>
    </location>
</feature>
<feature type="domain" description="EGF-like 15" evidence="4">
    <location>
        <begin position="2055"/>
        <end position="2089"/>
    </location>
</feature>
<feature type="domain" description="EGF-like 16" evidence="4">
    <location>
        <begin position="2090"/>
        <end position="2130"/>
    </location>
</feature>
<feature type="domain" description="EGF-like 17" evidence="4">
    <location>
        <begin position="2131"/>
        <end position="2173"/>
    </location>
</feature>
<feature type="domain" description="Link" evidence="6">
    <location>
        <begin position="2206"/>
        <end position="2298"/>
    </location>
</feature>
<feature type="domain" description="FAS1 7" evidence="5">
    <location>
        <begin position="2318"/>
        <end position="2452"/>
    </location>
</feature>
<feature type="region of interest" description="Interaction with TMSB4X" evidence="1">
    <location>
        <begin position="2510"/>
        <end position="2520"/>
    </location>
</feature>
<feature type="region of interest" description="Disordered" evidence="7">
    <location>
        <begin position="2514"/>
        <end position="2559"/>
    </location>
</feature>
<feature type="compositionally biased region" description="Polar residues" evidence="7">
    <location>
        <begin position="2516"/>
        <end position="2530"/>
    </location>
</feature>
<feature type="modified residue" description="Phosphoserine" evidence="15 16">
    <location>
        <position position="2503"/>
    </location>
</feature>
<feature type="glycosylation site" description="N-linked (GlcNAc...) asparagine" evidence="3">
    <location>
        <position position="71"/>
    </location>
</feature>
<feature type="glycosylation site" description="N-linked (GlcNAc...) asparagine" evidence="3">
    <location>
        <position position="167"/>
    </location>
</feature>
<feature type="glycosylation site" description="N-linked (GlcNAc...) asparagine" evidence="3">
    <location>
        <position position="345"/>
    </location>
</feature>
<feature type="glycosylation site" description="N-linked (GlcNAc...) asparagine" evidence="3">
    <location>
        <position position="572"/>
    </location>
</feature>
<feature type="glycosylation site" description="N-linked (GlcNAc...) asparagine" evidence="3">
    <location>
        <position position="626"/>
    </location>
</feature>
<feature type="glycosylation site" description="N-linked (GlcNAc...) asparagine" evidence="3">
    <location>
        <position position="673"/>
    </location>
</feature>
<feature type="glycosylation site" description="N-linked (GlcNAc...) asparagine" evidence="3">
    <location>
        <position position="691"/>
    </location>
</feature>
<feature type="glycosylation site" description="N-linked (GlcNAc...) asparagine" evidence="3">
    <location>
        <position position="768"/>
    </location>
</feature>
<feature type="glycosylation site" description="N-linked (GlcNAc...) asparagine" evidence="3">
    <location>
        <position position="796"/>
    </location>
</feature>
<feature type="glycosylation site" description="N-linked (GlcNAc...) asparagine" evidence="3">
    <location>
        <position position="854"/>
    </location>
</feature>
<feature type="glycosylation site" description="N-linked (GlcNAc...) asparagine" evidence="3">
    <location>
        <position position="933"/>
    </location>
</feature>
<feature type="glycosylation site" description="N-linked (GlcNAc...) asparagine" evidence="3">
    <location>
        <position position="1024"/>
    </location>
</feature>
<feature type="glycosylation site" description="N-linked (GlcNAc...) asparagine" evidence="3">
    <location>
        <position position="1036"/>
    </location>
</feature>
<feature type="glycosylation site" description="N-linked (GlcNAc...) asparagine" evidence="3">
    <location>
        <position position="1108"/>
    </location>
</feature>
<feature type="glycosylation site" description="N-linked (GlcNAc...) asparagine" evidence="3">
    <location>
        <position position="1255"/>
    </location>
</feature>
<feature type="glycosylation site" description="N-linked (GlcNAc...) asparagine" evidence="3">
    <location>
        <position position="1283"/>
    </location>
</feature>
<feature type="glycosylation site" description="N-linked (GlcNAc...) asparagine" evidence="3">
    <location>
        <position position="1374"/>
    </location>
</feature>
<feature type="glycosylation site" description="N-linked (GlcNAc...) asparagine" evidence="3">
    <location>
        <position position="1386"/>
    </location>
</feature>
<feature type="glycosylation site" description="N-linked (GlcNAc...) asparagine" evidence="3">
    <location>
        <position position="1444"/>
    </location>
</feature>
<feature type="glycosylation site" description="N-linked (GlcNAc...) asparagine" evidence="3">
    <location>
        <position position="1472"/>
    </location>
</feature>
<feature type="glycosylation site" description="N-linked (GlcNAc...) asparagine" evidence="3">
    <location>
        <position position="1580"/>
    </location>
</feature>
<feature type="glycosylation site" description="N-linked (GlcNAc...) asparagine" evidence="3">
    <location>
        <position position="1750"/>
    </location>
</feature>
<feature type="glycosylation site" description="N-linked (GlcNAc...) asparagine" evidence="3">
    <location>
        <position position="2001"/>
    </location>
</feature>
<feature type="glycosylation site" description="N-linked (GlcNAc...) asparagine" evidence="3">
    <location>
        <position position="2072"/>
    </location>
</feature>
<feature type="glycosylation site" description="N-linked (GlcNAc...) asparagine" evidence="3">
    <location>
        <position position="2287"/>
    </location>
</feature>
<feature type="glycosylation site" description="N-linked (GlcNAc...) asparagine" evidence="3">
    <location>
        <position position="2303"/>
    </location>
</feature>
<feature type="glycosylation site" description="N-linked (GlcNAc...) asparagine" evidence="3">
    <location>
        <position position="2375"/>
    </location>
</feature>
<feature type="glycosylation site" description="N-linked (GlcNAc...) asparagine" evidence="3">
    <location>
        <position position="2391"/>
    </location>
</feature>
<feature type="glycosylation site" description="N-linked (GlcNAc...) asparagine" evidence="3">
    <location>
        <position position="2400"/>
    </location>
</feature>
<feature type="disulfide bond" evidence="1">
    <location>
        <begin position="120"/>
        <end position="134"/>
    </location>
</feature>
<feature type="disulfide bond" evidence="1">
    <location>
        <begin position="128"/>
        <end position="144"/>
    </location>
</feature>
<feature type="disulfide bond" evidence="1">
    <location>
        <begin position="146"/>
        <end position="155"/>
    </location>
</feature>
<feature type="disulfide bond" evidence="1">
    <location>
        <begin position="168"/>
        <end position="179"/>
    </location>
</feature>
<feature type="disulfide bond" evidence="1">
    <location>
        <begin position="172"/>
        <end position="189"/>
    </location>
</feature>
<feature type="disulfide bond" evidence="1">
    <location>
        <begin position="191"/>
        <end position="200"/>
    </location>
</feature>
<feature type="disulfide bond" evidence="1">
    <location>
        <begin position="207"/>
        <end position="218"/>
    </location>
</feature>
<feature type="disulfide bond" evidence="1">
    <location>
        <begin position="212"/>
        <end position="230"/>
    </location>
</feature>
<feature type="disulfide bond" evidence="1">
    <location>
        <begin position="232"/>
        <end position="243"/>
    </location>
</feature>
<feature type="disulfide bond" evidence="1">
    <location>
        <begin position="249"/>
        <end position="260"/>
    </location>
</feature>
<feature type="disulfide bond" evidence="1">
    <location>
        <begin position="254"/>
        <end position="270"/>
    </location>
</feature>
<feature type="disulfide bond" evidence="1">
    <location>
        <begin position="272"/>
        <end position="283"/>
    </location>
</feature>
<feature type="disulfide bond" evidence="1">
    <location>
        <begin position="334"/>
        <end position="346"/>
    </location>
</feature>
<feature type="disulfide bond" evidence="1">
    <location>
        <begin position="340"/>
        <end position="356"/>
    </location>
</feature>
<feature type="disulfide bond" evidence="1">
    <location>
        <begin position="358"/>
        <end position="369"/>
    </location>
</feature>
<feature type="disulfide bond" evidence="1">
    <location>
        <begin position="747"/>
        <end position="761"/>
    </location>
</feature>
<feature type="disulfide bond" evidence="1">
    <location>
        <begin position="755"/>
        <end position="771"/>
    </location>
</feature>
<feature type="disulfide bond" evidence="1">
    <location>
        <begin position="773"/>
        <end position="782"/>
    </location>
</feature>
<feature type="disulfide bond" evidence="1">
    <location>
        <begin position="837"/>
        <end position="850"/>
    </location>
</feature>
<feature type="disulfide bond" evidence="1">
    <location>
        <begin position="844"/>
        <end position="859"/>
    </location>
</feature>
<feature type="disulfide bond" evidence="1">
    <location>
        <begin position="861"/>
        <end position="872"/>
    </location>
</feature>
<feature type="disulfide bond" evidence="1">
    <location>
        <begin position="878"/>
        <end position="893"/>
    </location>
</feature>
<feature type="disulfide bond" evidence="1">
    <location>
        <begin position="887"/>
        <end position="903"/>
    </location>
</feature>
<feature type="disulfide bond" evidence="1">
    <location>
        <begin position="905"/>
        <end position="916"/>
    </location>
</feature>
<feature type="disulfide bond" evidence="1">
    <location>
        <begin position="922"/>
        <end position="936"/>
    </location>
</feature>
<feature type="disulfide bond" evidence="1">
    <location>
        <begin position="930"/>
        <end position="946"/>
    </location>
</feature>
<feature type="disulfide bond" evidence="1">
    <location>
        <begin position="948"/>
        <end position="959"/>
    </location>
</feature>
<feature type="disulfide bond" evidence="1">
    <location>
        <begin position="965"/>
        <end position="978"/>
    </location>
</feature>
<feature type="disulfide bond" evidence="1">
    <location>
        <begin position="972"/>
        <end position="988"/>
    </location>
</feature>
<feature type="disulfide bond" evidence="1">
    <location>
        <begin position="990"/>
        <end position="1001"/>
    </location>
</feature>
<feature type="disulfide bond" evidence="1">
    <location>
        <begin position="1355"/>
        <end position="1369"/>
    </location>
</feature>
<feature type="disulfide bond" evidence="1">
    <location>
        <begin position="1363"/>
        <end position="1379"/>
    </location>
</feature>
<feature type="disulfide bond" evidence="1">
    <location>
        <begin position="1381"/>
        <end position="1390"/>
    </location>
</feature>
<feature type="disulfide bond" evidence="1">
    <location>
        <begin position="1402"/>
        <end position="1413"/>
    </location>
</feature>
<feature type="disulfide bond" evidence="1">
    <location>
        <begin position="1406"/>
        <end position="1423"/>
    </location>
</feature>
<feature type="disulfide bond" evidence="1">
    <location>
        <begin position="1425"/>
        <end position="1434"/>
    </location>
</feature>
<feature type="disulfide bond" evidence="1">
    <location>
        <begin position="1443"/>
        <end position="1453"/>
    </location>
</feature>
<feature type="disulfide bond" evidence="1">
    <location>
        <begin position="1447"/>
        <end position="1463"/>
    </location>
</feature>
<feature type="disulfide bond" evidence="1">
    <location>
        <begin position="1465"/>
        <end position="1476"/>
    </location>
</feature>
<feature type="disulfide bond" evidence="1">
    <location>
        <begin position="1482"/>
        <end position="1495"/>
    </location>
</feature>
<feature type="disulfide bond" evidence="1">
    <location>
        <begin position="1489"/>
        <end position="1505"/>
    </location>
</feature>
<feature type="disulfide bond" evidence="1">
    <location>
        <begin position="1507"/>
        <end position="1518"/>
    </location>
</feature>
<feature type="disulfide bond" evidence="1">
    <location>
        <begin position="1524"/>
        <end position="1537"/>
    </location>
</feature>
<feature type="disulfide bond" evidence="1">
    <location>
        <begin position="1531"/>
        <end position="1547"/>
    </location>
</feature>
<feature type="disulfide bond" evidence="1">
    <location>
        <begin position="1549"/>
        <end position="1560"/>
    </location>
</feature>
<feature type="disulfide bond" evidence="1">
    <location>
        <begin position="1566"/>
        <end position="1579"/>
    </location>
</feature>
<feature type="disulfide bond" evidence="1">
    <location>
        <begin position="1573"/>
        <end position="1589"/>
    </location>
</feature>
<feature type="disulfide bond" evidence="1">
    <location>
        <begin position="1591"/>
        <end position="1602"/>
    </location>
</feature>
<feature type="disulfide bond" evidence="1">
    <location>
        <begin position="1970"/>
        <end position="1984"/>
    </location>
</feature>
<feature type="disulfide bond" evidence="1">
    <location>
        <begin position="1978"/>
        <end position="1994"/>
    </location>
</feature>
<feature type="disulfide bond" evidence="1">
    <location>
        <begin position="1996"/>
        <end position="2005"/>
    </location>
</feature>
<feature type="disulfide bond" evidence="1">
    <location>
        <begin position="2017"/>
        <end position="2028"/>
    </location>
</feature>
<feature type="disulfide bond" evidence="1">
    <location>
        <begin position="2022"/>
        <end position="2038"/>
    </location>
</feature>
<feature type="disulfide bond" evidence="1">
    <location>
        <begin position="2040"/>
        <end position="2049"/>
    </location>
</feature>
<feature type="disulfide bond" evidence="1">
    <location>
        <begin position="2059"/>
        <end position="2069"/>
    </location>
</feature>
<feature type="disulfide bond" evidence="1">
    <location>
        <begin position="2063"/>
        <end position="2075"/>
    </location>
</feature>
<feature type="disulfide bond" evidence="1">
    <location>
        <begin position="2077"/>
        <end position="2088"/>
    </location>
</feature>
<feature type="disulfide bond" evidence="1">
    <location>
        <begin position="2094"/>
        <end position="2107"/>
    </location>
</feature>
<feature type="disulfide bond" evidence="1">
    <location>
        <begin position="2101"/>
        <end position="2116"/>
    </location>
</feature>
<feature type="disulfide bond" evidence="1">
    <location>
        <begin position="2118"/>
        <end position="2129"/>
    </location>
</feature>
<feature type="disulfide bond" evidence="1">
    <location>
        <begin position="2135"/>
        <end position="2149"/>
    </location>
</feature>
<feature type="disulfide bond" evidence="1">
    <location>
        <begin position="2143"/>
        <end position="2159"/>
    </location>
</feature>
<feature type="disulfide bond" evidence="1">
    <location>
        <begin position="2161"/>
        <end position="2172"/>
    </location>
</feature>
<feature type="disulfide bond" evidence="1">
    <location>
        <begin position="2228"/>
        <end position="2296"/>
    </location>
</feature>
<feature type="disulfide bond" evidence="1">
    <location>
        <begin position="2252"/>
        <end position="2273"/>
    </location>
</feature>
<feature type="sequence conflict" description="In Ref. 2; BAC28741." evidence="12" ref="2">
    <original>L</original>
    <variation>G</variation>
    <location>
        <position position="1666"/>
    </location>
</feature>
<organism>
    <name type="scientific">Mus musculus</name>
    <name type="common">Mouse</name>
    <dbReference type="NCBI Taxonomy" id="10090"/>
    <lineage>
        <taxon>Eukaryota</taxon>
        <taxon>Metazoa</taxon>
        <taxon>Chordata</taxon>
        <taxon>Craniata</taxon>
        <taxon>Vertebrata</taxon>
        <taxon>Euteleostomi</taxon>
        <taxon>Mammalia</taxon>
        <taxon>Eutheria</taxon>
        <taxon>Euarchontoglires</taxon>
        <taxon>Glires</taxon>
        <taxon>Rodentia</taxon>
        <taxon>Myomorpha</taxon>
        <taxon>Muroidea</taxon>
        <taxon>Muridae</taxon>
        <taxon>Murinae</taxon>
        <taxon>Mus</taxon>
        <taxon>Mus</taxon>
    </lineage>
</organism>
<protein>
    <recommendedName>
        <fullName>Stabilin-2</fullName>
    </recommendedName>
    <alternativeName>
        <fullName>Fasciclin, EGF-like, laminin-type EGF-like and link domain-containing scavenger receptor 2</fullName>
        <shortName>FEEL-2</shortName>
    </alternativeName>
    <component>
        <recommendedName>
            <fullName>Short form stabilin-2</fullName>
        </recommendedName>
    </component>
</protein>
<keyword id="KW-1003">Cell membrane</keyword>
<keyword id="KW-0963">Cytoplasm</keyword>
<keyword id="KW-1015">Disulfide bond</keyword>
<keyword id="KW-0245">EGF-like domain</keyword>
<keyword id="KW-0254">Endocytosis</keyword>
<keyword id="KW-0325">Glycoprotein</keyword>
<keyword id="KW-0373">Hyaluronic acid</keyword>
<keyword id="KW-0424">Laminin EGF-like domain</keyword>
<keyword id="KW-0472">Membrane</keyword>
<keyword id="KW-0597">Phosphoprotein</keyword>
<keyword id="KW-0675">Receptor</keyword>
<keyword id="KW-1185">Reference proteome</keyword>
<keyword id="KW-0677">Repeat</keyword>
<keyword id="KW-0732">Signal</keyword>
<keyword id="KW-0812">Transmembrane</keyword>
<keyword id="KW-1133">Transmembrane helix</keyword>
<gene>
    <name evidence="14" type="primary">Stab2</name>
    <name type="synonym">Feel2</name>
    <name type="synonym">Hare</name>
</gene>